<gene>
    <name evidence="1" type="primary">rpmD</name>
    <name type="ordered locus">RBE_1044</name>
</gene>
<organism>
    <name type="scientific">Rickettsia bellii (strain RML369-C)</name>
    <dbReference type="NCBI Taxonomy" id="336407"/>
    <lineage>
        <taxon>Bacteria</taxon>
        <taxon>Pseudomonadati</taxon>
        <taxon>Pseudomonadota</taxon>
        <taxon>Alphaproteobacteria</taxon>
        <taxon>Rickettsiales</taxon>
        <taxon>Rickettsiaceae</taxon>
        <taxon>Rickettsieae</taxon>
        <taxon>Rickettsia</taxon>
        <taxon>belli group</taxon>
    </lineage>
</organism>
<dbReference type="EMBL" id="CP000087">
    <property type="protein sequence ID" value="ABE05125.1"/>
    <property type="molecule type" value="Genomic_DNA"/>
</dbReference>
<dbReference type="RefSeq" id="WP_011477703.1">
    <property type="nucleotide sequence ID" value="NC_007940.1"/>
</dbReference>
<dbReference type="SMR" id="Q1RHN9"/>
<dbReference type="KEGG" id="rbe:RBE_1044"/>
<dbReference type="eggNOG" id="COG1841">
    <property type="taxonomic scope" value="Bacteria"/>
</dbReference>
<dbReference type="HOGENOM" id="CLU_131047_1_5_5"/>
<dbReference type="OrthoDB" id="9812790at2"/>
<dbReference type="Proteomes" id="UP000001951">
    <property type="component" value="Chromosome"/>
</dbReference>
<dbReference type="GO" id="GO:0022625">
    <property type="term" value="C:cytosolic large ribosomal subunit"/>
    <property type="evidence" value="ECO:0007669"/>
    <property type="project" value="TreeGrafter"/>
</dbReference>
<dbReference type="GO" id="GO:0003735">
    <property type="term" value="F:structural constituent of ribosome"/>
    <property type="evidence" value="ECO:0007669"/>
    <property type="project" value="InterPro"/>
</dbReference>
<dbReference type="GO" id="GO:0006412">
    <property type="term" value="P:translation"/>
    <property type="evidence" value="ECO:0007669"/>
    <property type="project" value="UniProtKB-UniRule"/>
</dbReference>
<dbReference type="CDD" id="cd01658">
    <property type="entry name" value="Ribosomal_L30"/>
    <property type="match status" value="1"/>
</dbReference>
<dbReference type="Gene3D" id="3.30.1390.20">
    <property type="entry name" value="Ribosomal protein L30, ferredoxin-like fold domain"/>
    <property type="match status" value="1"/>
</dbReference>
<dbReference type="HAMAP" id="MF_01371_B">
    <property type="entry name" value="Ribosomal_uL30_B"/>
    <property type="match status" value="1"/>
</dbReference>
<dbReference type="InterPro" id="IPR036919">
    <property type="entry name" value="Ribo_uL30_ferredoxin-like_sf"/>
</dbReference>
<dbReference type="InterPro" id="IPR005996">
    <property type="entry name" value="Ribosomal_uL30_bac-type"/>
</dbReference>
<dbReference type="InterPro" id="IPR016082">
    <property type="entry name" value="Ribosomal_uL30_ferredoxin-like"/>
</dbReference>
<dbReference type="NCBIfam" id="TIGR01308">
    <property type="entry name" value="rpmD_bact"/>
    <property type="match status" value="1"/>
</dbReference>
<dbReference type="PANTHER" id="PTHR15892:SF2">
    <property type="entry name" value="LARGE RIBOSOMAL SUBUNIT PROTEIN UL30M"/>
    <property type="match status" value="1"/>
</dbReference>
<dbReference type="PANTHER" id="PTHR15892">
    <property type="entry name" value="MITOCHONDRIAL RIBOSOMAL PROTEIN L30"/>
    <property type="match status" value="1"/>
</dbReference>
<dbReference type="Pfam" id="PF00327">
    <property type="entry name" value="Ribosomal_L30"/>
    <property type="match status" value="1"/>
</dbReference>
<dbReference type="PIRSF" id="PIRSF002211">
    <property type="entry name" value="Ribosomal_L30_bac-type"/>
    <property type="match status" value="1"/>
</dbReference>
<dbReference type="SUPFAM" id="SSF55129">
    <property type="entry name" value="Ribosomal protein L30p/L7e"/>
    <property type="match status" value="1"/>
</dbReference>
<reference key="1">
    <citation type="journal article" date="2006" name="PLoS Genet.">
        <title>Genome sequence of Rickettsia bellii illuminates the role of amoebae in gene exchanges between intracellular pathogens.</title>
        <authorList>
            <person name="Ogata H."/>
            <person name="La Scola B."/>
            <person name="Audic S."/>
            <person name="Renesto P."/>
            <person name="Blanc G."/>
            <person name="Robert C."/>
            <person name="Fournier P.-E."/>
            <person name="Claverie J.-M."/>
            <person name="Raoult D."/>
        </authorList>
    </citation>
    <scope>NUCLEOTIDE SEQUENCE [LARGE SCALE GENOMIC DNA]</scope>
    <source>
        <strain>RML369-C</strain>
    </source>
</reference>
<keyword id="KW-0687">Ribonucleoprotein</keyword>
<keyword id="KW-0689">Ribosomal protein</keyword>
<protein>
    <recommendedName>
        <fullName evidence="1">Large ribosomal subunit protein uL30</fullName>
    </recommendedName>
    <alternativeName>
        <fullName evidence="2">50S ribosomal protein L30</fullName>
    </alternativeName>
</protein>
<comment type="subunit">
    <text evidence="1">Part of the 50S ribosomal subunit.</text>
</comment>
<comment type="similarity">
    <text evidence="1">Belongs to the universal ribosomal protein uL30 family.</text>
</comment>
<sequence length="65" mass="7305">MNNKNLINDVKVTQVKSSIGRKYDQKLTLIGLGLNKINKSVVLKNTDSVQGMLKKVEHLLKIENV</sequence>
<proteinExistence type="inferred from homology"/>
<feature type="chain" id="PRO_0000274838" description="Large ribosomal subunit protein uL30">
    <location>
        <begin position="1"/>
        <end position="65"/>
    </location>
</feature>
<evidence type="ECO:0000255" key="1">
    <source>
        <dbReference type="HAMAP-Rule" id="MF_01371"/>
    </source>
</evidence>
<evidence type="ECO:0000305" key="2"/>
<accession>Q1RHN9</accession>
<name>RL30_RICBR</name>